<gene>
    <name type="primary">pam16</name>
    <name type="synonym">tim16</name>
    <name type="ORF">SPBC713.10</name>
</gene>
<comment type="function">
    <text evidence="1">Essential component of the PAM complex, a complex required for the translocation of transit peptide-containing proteins from the inner membrane into the mitochondrial matrix in an ATP-dependent manner. In the complex, it is required to regulate activity of mtHSP70 (ssc1) via its interaction with PAM18/TIM14. May act by positioning pam18/tim14 in juxtaposition to mtHSP70 at the translocon to maximize ATPase stimulation (By similarity).</text>
</comment>
<comment type="subunit">
    <text evidence="1">Heterodimer with pam18. Component of the PAM complex, at least composed of mtHsp70, mge1, tim44, pam16, pam17 and pam18 (By similarity).</text>
</comment>
<comment type="subcellular location">
    <subcellularLocation>
        <location evidence="1">Mitochondrion inner membrane</location>
        <topology evidence="1">Peripheral membrane protein</topology>
    </subcellularLocation>
</comment>
<comment type="domain">
    <text evidence="1">The J-like region, although related to the J domain does not stimulate ATPase activity of mtHSP70. It nevertheless mediates the heterodimerization with the J domain of PAM18 and is therefore essential for PAM complex function (By similarity).</text>
</comment>
<comment type="similarity">
    <text evidence="3">Belongs to the TIM16/PAM16 family.</text>
</comment>
<proteinExistence type="inferred from homology"/>
<accession>Q9C1W5</accession>
<name>TIM16_SCHPO</name>
<feature type="chain" id="PRO_0000214096" description="Mitochondrial import inner membrane translocase subunit tim16">
    <location>
        <begin position="1"/>
        <end position="128"/>
    </location>
</feature>
<feature type="region of interest" description="J-like">
    <location>
        <begin position="59"/>
        <end position="113"/>
    </location>
</feature>
<feature type="region of interest" description="Disordered" evidence="2">
    <location>
        <begin position="108"/>
        <end position="128"/>
    </location>
</feature>
<feature type="compositionally biased region" description="Polar residues" evidence="2">
    <location>
        <begin position="117"/>
        <end position="128"/>
    </location>
</feature>
<evidence type="ECO:0000250" key="1"/>
<evidence type="ECO:0000256" key="2">
    <source>
        <dbReference type="SAM" id="MobiDB-lite"/>
    </source>
</evidence>
<evidence type="ECO:0000305" key="3"/>
<dbReference type="EMBL" id="CU329671">
    <property type="protein sequence ID" value="CAC22611.1"/>
    <property type="molecule type" value="Genomic_DNA"/>
</dbReference>
<dbReference type="RefSeq" id="NP_595349.1">
    <property type="nucleotide sequence ID" value="NM_001021257.2"/>
</dbReference>
<dbReference type="SMR" id="Q9C1W5"/>
<dbReference type="BioGRID" id="277667">
    <property type="interactions" value="3"/>
</dbReference>
<dbReference type="FunCoup" id="Q9C1W5">
    <property type="interactions" value="84"/>
</dbReference>
<dbReference type="STRING" id="284812.Q9C1W5"/>
<dbReference type="iPTMnet" id="Q9C1W5"/>
<dbReference type="PaxDb" id="4896-SPBC713.10.1"/>
<dbReference type="EnsemblFungi" id="SPBC713.10.1">
    <property type="protein sequence ID" value="SPBC713.10.1:pep"/>
    <property type="gene ID" value="SPBC713.10"/>
</dbReference>
<dbReference type="GeneID" id="2541152"/>
<dbReference type="KEGG" id="spo:2541152"/>
<dbReference type="PomBase" id="SPBC713.10"/>
<dbReference type="VEuPathDB" id="FungiDB:SPBC713.10"/>
<dbReference type="eggNOG" id="KOG3442">
    <property type="taxonomic scope" value="Eukaryota"/>
</dbReference>
<dbReference type="HOGENOM" id="CLU_101461_2_1_1"/>
<dbReference type="InParanoid" id="Q9C1W5"/>
<dbReference type="OMA" id="RMFKIND"/>
<dbReference type="PhylomeDB" id="Q9C1W5"/>
<dbReference type="PRO" id="PR:Q9C1W5"/>
<dbReference type="Proteomes" id="UP000002485">
    <property type="component" value="Chromosome II"/>
</dbReference>
<dbReference type="GO" id="GO:0005739">
    <property type="term" value="C:mitochondrion"/>
    <property type="evidence" value="ECO:0007005"/>
    <property type="project" value="PomBase"/>
</dbReference>
<dbReference type="GO" id="GO:0001405">
    <property type="term" value="C:PAM complex, Tim23 associated import motor"/>
    <property type="evidence" value="ECO:0000250"/>
    <property type="project" value="PomBase"/>
</dbReference>
<dbReference type="GO" id="GO:0005744">
    <property type="term" value="C:TIM23 mitochondrial import inner membrane translocase complex"/>
    <property type="evidence" value="ECO:0000318"/>
    <property type="project" value="GO_Central"/>
</dbReference>
<dbReference type="GO" id="GO:0016887">
    <property type="term" value="F:ATP hydrolysis activity"/>
    <property type="evidence" value="ECO:0000305"/>
    <property type="project" value="PomBase"/>
</dbReference>
<dbReference type="GO" id="GO:0015450">
    <property type="term" value="F:protein-transporting ATPase activity"/>
    <property type="evidence" value="ECO:0000250"/>
    <property type="project" value="PomBase"/>
</dbReference>
<dbReference type="GO" id="GO:0030150">
    <property type="term" value="P:protein import into mitochondrial matrix"/>
    <property type="evidence" value="ECO:0000250"/>
    <property type="project" value="PomBase"/>
</dbReference>
<dbReference type="FunFam" id="1.10.287.110:FF:000006">
    <property type="entry name" value="Import inner membrane translocase subunit TIM16"/>
    <property type="match status" value="1"/>
</dbReference>
<dbReference type="Gene3D" id="1.10.287.110">
    <property type="entry name" value="DnaJ domain"/>
    <property type="match status" value="1"/>
</dbReference>
<dbReference type="InterPro" id="IPR036869">
    <property type="entry name" value="J_dom_sf"/>
</dbReference>
<dbReference type="InterPro" id="IPR005341">
    <property type="entry name" value="Tim16"/>
</dbReference>
<dbReference type="PANTHER" id="PTHR12388">
    <property type="entry name" value="MITOCHONDRIA ASSOCIATED GRANULOCYTE MACROPHAGE CSF SIGNALING MOLECULE"/>
    <property type="match status" value="1"/>
</dbReference>
<dbReference type="PANTHER" id="PTHR12388:SF0">
    <property type="entry name" value="MITOCHONDRIAL IMPORT INNER MEMBRANE TRANSLOCASE SUBUNIT TIM16"/>
    <property type="match status" value="1"/>
</dbReference>
<dbReference type="Pfam" id="PF03656">
    <property type="entry name" value="Pam16"/>
    <property type="match status" value="1"/>
</dbReference>
<reference key="1">
    <citation type="journal article" date="2002" name="Nature">
        <title>The genome sequence of Schizosaccharomyces pombe.</title>
        <authorList>
            <person name="Wood V."/>
            <person name="Gwilliam R."/>
            <person name="Rajandream M.A."/>
            <person name="Lyne M.H."/>
            <person name="Lyne R."/>
            <person name="Stewart A."/>
            <person name="Sgouros J.G."/>
            <person name="Peat N."/>
            <person name="Hayles J."/>
            <person name="Baker S.G."/>
            <person name="Basham D."/>
            <person name="Bowman S."/>
            <person name="Brooks K."/>
            <person name="Brown D."/>
            <person name="Brown S."/>
            <person name="Chillingworth T."/>
            <person name="Churcher C.M."/>
            <person name="Collins M."/>
            <person name="Connor R."/>
            <person name="Cronin A."/>
            <person name="Davis P."/>
            <person name="Feltwell T."/>
            <person name="Fraser A."/>
            <person name="Gentles S."/>
            <person name="Goble A."/>
            <person name="Hamlin N."/>
            <person name="Harris D.E."/>
            <person name="Hidalgo J."/>
            <person name="Hodgson G."/>
            <person name="Holroyd S."/>
            <person name="Hornsby T."/>
            <person name="Howarth S."/>
            <person name="Huckle E.J."/>
            <person name="Hunt S."/>
            <person name="Jagels K."/>
            <person name="James K.D."/>
            <person name="Jones L."/>
            <person name="Jones M."/>
            <person name="Leather S."/>
            <person name="McDonald S."/>
            <person name="McLean J."/>
            <person name="Mooney P."/>
            <person name="Moule S."/>
            <person name="Mungall K.L."/>
            <person name="Murphy L.D."/>
            <person name="Niblett D."/>
            <person name="Odell C."/>
            <person name="Oliver K."/>
            <person name="O'Neil S."/>
            <person name="Pearson D."/>
            <person name="Quail M.A."/>
            <person name="Rabbinowitsch E."/>
            <person name="Rutherford K.M."/>
            <person name="Rutter S."/>
            <person name="Saunders D."/>
            <person name="Seeger K."/>
            <person name="Sharp S."/>
            <person name="Skelton J."/>
            <person name="Simmonds M.N."/>
            <person name="Squares R."/>
            <person name="Squares S."/>
            <person name="Stevens K."/>
            <person name="Taylor K."/>
            <person name="Taylor R.G."/>
            <person name="Tivey A."/>
            <person name="Walsh S.V."/>
            <person name="Warren T."/>
            <person name="Whitehead S."/>
            <person name="Woodward J.R."/>
            <person name="Volckaert G."/>
            <person name="Aert R."/>
            <person name="Robben J."/>
            <person name="Grymonprez B."/>
            <person name="Weltjens I."/>
            <person name="Vanstreels E."/>
            <person name="Rieger M."/>
            <person name="Schaefer M."/>
            <person name="Mueller-Auer S."/>
            <person name="Gabel C."/>
            <person name="Fuchs M."/>
            <person name="Duesterhoeft A."/>
            <person name="Fritzc C."/>
            <person name="Holzer E."/>
            <person name="Moestl D."/>
            <person name="Hilbert H."/>
            <person name="Borzym K."/>
            <person name="Langer I."/>
            <person name="Beck A."/>
            <person name="Lehrach H."/>
            <person name="Reinhardt R."/>
            <person name="Pohl T.M."/>
            <person name="Eger P."/>
            <person name="Zimmermann W."/>
            <person name="Wedler H."/>
            <person name="Wambutt R."/>
            <person name="Purnelle B."/>
            <person name="Goffeau A."/>
            <person name="Cadieu E."/>
            <person name="Dreano S."/>
            <person name="Gloux S."/>
            <person name="Lelaure V."/>
            <person name="Mottier S."/>
            <person name="Galibert F."/>
            <person name="Aves S.J."/>
            <person name="Xiang Z."/>
            <person name="Hunt C."/>
            <person name="Moore K."/>
            <person name="Hurst S.M."/>
            <person name="Lucas M."/>
            <person name="Rochet M."/>
            <person name="Gaillardin C."/>
            <person name="Tallada V.A."/>
            <person name="Garzon A."/>
            <person name="Thode G."/>
            <person name="Daga R.R."/>
            <person name="Cruzado L."/>
            <person name="Jimenez J."/>
            <person name="Sanchez M."/>
            <person name="del Rey F."/>
            <person name="Benito J."/>
            <person name="Dominguez A."/>
            <person name="Revuelta J.L."/>
            <person name="Moreno S."/>
            <person name="Armstrong J."/>
            <person name="Forsburg S.L."/>
            <person name="Cerutti L."/>
            <person name="Lowe T."/>
            <person name="McCombie W.R."/>
            <person name="Paulsen I."/>
            <person name="Potashkin J."/>
            <person name="Shpakovski G.V."/>
            <person name="Ussery D."/>
            <person name="Barrell B.G."/>
            <person name="Nurse P."/>
        </authorList>
    </citation>
    <scope>NUCLEOTIDE SEQUENCE [LARGE SCALE GENOMIC DNA]</scope>
    <source>
        <strain>972 / ATCC 24843</strain>
    </source>
</reference>
<keyword id="KW-0472">Membrane</keyword>
<keyword id="KW-0496">Mitochondrion</keyword>
<keyword id="KW-0999">Mitochondrion inner membrane</keyword>
<keyword id="KW-0653">Protein transport</keyword>
<keyword id="KW-1185">Reference proteome</keyword>
<keyword id="KW-0811">Translocation</keyword>
<keyword id="KW-0813">Transport</keyword>
<sequence>MSLPRAVGRFIIVGSQVMSKAFVQAYKQMIANAAQQSTGQAAASKSSTAVRRGEMTIQEAGSILNIKPESLEEGELEKRFQKMFEINDPKKGGSFYLQSKVFRAHEKLKSELDQKIQEQSPAKPTSSP</sequence>
<protein>
    <recommendedName>
        <fullName>Mitochondrial import inner membrane translocase subunit tim16</fullName>
    </recommendedName>
    <alternativeName>
        <fullName>Presequence translocated-associated motor subunit pam16</fullName>
    </alternativeName>
</protein>
<organism>
    <name type="scientific">Schizosaccharomyces pombe (strain 972 / ATCC 24843)</name>
    <name type="common">Fission yeast</name>
    <dbReference type="NCBI Taxonomy" id="284812"/>
    <lineage>
        <taxon>Eukaryota</taxon>
        <taxon>Fungi</taxon>
        <taxon>Dikarya</taxon>
        <taxon>Ascomycota</taxon>
        <taxon>Taphrinomycotina</taxon>
        <taxon>Schizosaccharomycetes</taxon>
        <taxon>Schizosaccharomycetales</taxon>
        <taxon>Schizosaccharomycetaceae</taxon>
        <taxon>Schizosaccharomyces</taxon>
    </lineage>
</organism>